<comment type="function">
    <text evidence="2">Thioredoxin reductase; part of the gene cluster that mediates the biosynthesis of aspirochlorine (or antibiotic A30641), an unusual halogenated spiro compound with distinctive antifungal properties due to selective inhibition of protein biosynthesis, and which is also active against bacteria, viruses, and murine tumor cells (PubMed:25302411). The non-ribosomal peptide synthetase (NRPS) aclP is responsible the formation of the diketopiperazine (DKP) core from the condensation of 2 phenylalanine residues (PubMed:25302411). One Phe residue is tailored into chlorotyrosine by hydroxylation and chlorination, whereas the second Phe undergoes an unprecedented C-C bond cleavage to be converted into glycine (PubMed:25302411). After formation of the DKP, sulfur is incorporated into the DKP by conjugation with glutathione by aclG, followed by its stepwise degradation to the thiol by aclI, aclJ and aclK, and the dithiol oxidation by aclT (PubMed:25302411). In addition, oxygenases (aclB, aclC, aclL and aclO) and O-methyltransferases (aclM and aclU) act as tailoring enzymes to produce the intermediate dechloroaspirochlorine (PubMed:25302411). Ultimately, chlorination of dechloroaspirochlorine by the halogenase aclH is the last step in the aspirochlorine pathway (PubMed:25302411).</text>
</comment>
<comment type="cofactor">
    <cofactor evidence="1">
        <name>FAD</name>
        <dbReference type="ChEBI" id="CHEBI:57692"/>
    </cofactor>
    <text evidence="1">Binds 1 FAD per subunit.</text>
</comment>
<comment type="pathway">
    <text evidence="5">Mycotoxin biosynthesis.</text>
</comment>
<comment type="subunit">
    <text evidence="1">Homodimer.</text>
</comment>
<comment type="similarity">
    <text evidence="4">Belongs to the class-II pyridine nucleotide-disulfide oxidoreductase family.</text>
</comment>
<name>ACLT_ASPOR</name>
<proteinExistence type="inferred from homology"/>
<dbReference type="EC" id="1.8.1.-" evidence="5"/>
<dbReference type="EMBL" id="BA000050">
    <property type="protein sequence ID" value="BAE56601.1"/>
    <property type="molecule type" value="Genomic_DNA"/>
</dbReference>
<dbReference type="RefSeq" id="XP_001818603.1">
    <property type="nucleotide sequence ID" value="XM_001818551.1"/>
</dbReference>
<dbReference type="SMR" id="Q2UPB4"/>
<dbReference type="STRING" id="510516.Q2UPB4"/>
<dbReference type="EnsemblFungi" id="BAE56601">
    <property type="protein sequence ID" value="BAE56601"/>
    <property type="gene ID" value="AO090001000038"/>
</dbReference>
<dbReference type="GeneID" id="5990574"/>
<dbReference type="KEGG" id="aor:AO090001000038"/>
<dbReference type="VEuPathDB" id="FungiDB:AO090001000038"/>
<dbReference type="HOGENOM" id="CLU_031864_5_0_1"/>
<dbReference type="OMA" id="MALHTVW"/>
<dbReference type="OrthoDB" id="71988at5052"/>
<dbReference type="Proteomes" id="UP000006564">
    <property type="component" value="Chromosome 2"/>
</dbReference>
<dbReference type="GO" id="GO:0016491">
    <property type="term" value="F:oxidoreductase activity"/>
    <property type="evidence" value="ECO:0007669"/>
    <property type="project" value="UniProtKB-KW"/>
</dbReference>
<dbReference type="GO" id="GO:0097237">
    <property type="term" value="P:cellular response to toxic substance"/>
    <property type="evidence" value="ECO:0007669"/>
    <property type="project" value="UniProtKB-ARBA"/>
</dbReference>
<dbReference type="Gene3D" id="3.50.50.60">
    <property type="entry name" value="FAD/NAD(P)-binding domain"/>
    <property type="match status" value="2"/>
</dbReference>
<dbReference type="InterPro" id="IPR036188">
    <property type="entry name" value="FAD/NAD-bd_sf"/>
</dbReference>
<dbReference type="InterPro" id="IPR023753">
    <property type="entry name" value="FAD/NAD-binding_dom"/>
</dbReference>
<dbReference type="InterPro" id="IPR050097">
    <property type="entry name" value="Ferredoxin-NADP_redctase_2"/>
</dbReference>
<dbReference type="PANTHER" id="PTHR48105">
    <property type="entry name" value="THIOREDOXIN REDUCTASE 1-RELATED-RELATED"/>
    <property type="match status" value="1"/>
</dbReference>
<dbReference type="Pfam" id="PF07992">
    <property type="entry name" value="Pyr_redox_2"/>
    <property type="match status" value="1"/>
</dbReference>
<dbReference type="PRINTS" id="PR00368">
    <property type="entry name" value="FADPNR"/>
</dbReference>
<dbReference type="PRINTS" id="PR00469">
    <property type="entry name" value="PNDRDTASEII"/>
</dbReference>
<dbReference type="SUPFAM" id="SSF51905">
    <property type="entry name" value="FAD/NAD(P)-binding domain"/>
    <property type="match status" value="1"/>
</dbReference>
<keyword id="KW-0274">FAD</keyword>
<keyword id="KW-0285">Flavoprotein</keyword>
<keyword id="KW-0560">Oxidoreductase</keyword>
<keyword id="KW-1185">Reference proteome</keyword>
<accession>Q2UPB4</accession>
<evidence type="ECO:0000250" key="1">
    <source>
        <dbReference type="UniProtKB" id="E9RAH5"/>
    </source>
</evidence>
<evidence type="ECO:0000269" key="2">
    <source>
    </source>
</evidence>
<evidence type="ECO:0000303" key="3">
    <source>
    </source>
</evidence>
<evidence type="ECO:0000305" key="4"/>
<evidence type="ECO:0000305" key="5">
    <source>
    </source>
</evidence>
<protein>
    <recommendedName>
        <fullName evidence="3">Thioredoxin reductase aclT</fullName>
        <ecNumber evidence="5">1.8.1.-</ecNumber>
    </recommendedName>
    <alternativeName>
        <fullName evidence="3">Aspirochlorine biosynthesis protein T</fullName>
    </alternativeName>
</protein>
<feature type="chain" id="PRO_0000441210" description="Thioredoxin reductase aclT">
    <location>
        <begin position="1"/>
        <end position="334"/>
    </location>
</feature>
<feature type="binding site" evidence="1">
    <location>
        <begin position="16"/>
        <end position="19"/>
    </location>
    <ligand>
        <name>FAD</name>
        <dbReference type="ChEBI" id="CHEBI:57692"/>
    </ligand>
</feature>
<feature type="binding site" evidence="1">
    <location>
        <begin position="38"/>
        <end position="43"/>
    </location>
    <ligand>
        <name>FAD</name>
        <dbReference type="ChEBI" id="CHEBI:57692"/>
    </ligand>
</feature>
<feature type="binding site" evidence="1">
    <location>
        <position position="93"/>
    </location>
    <ligand>
        <name>FAD</name>
        <dbReference type="ChEBI" id="CHEBI:57692"/>
    </ligand>
</feature>
<feature type="binding site" evidence="1">
    <location>
        <position position="122"/>
    </location>
    <ligand>
        <name>FAD</name>
        <dbReference type="ChEBI" id="CHEBI:57692"/>
    </ligand>
</feature>
<feature type="binding site" evidence="1">
    <location>
        <position position="294"/>
    </location>
    <ligand>
        <name>FAD</name>
        <dbReference type="ChEBI" id="CHEBI:57692"/>
    </ligand>
</feature>
<feature type="binding site" evidence="1">
    <location>
        <begin position="302"/>
        <end position="303"/>
    </location>
    <ligand>
        <name>FAD</name>
        <dbReference type="ChEBI" id="CHEBI:57692"/>
    </ligand>
</feature>
<gene>
    <name evidence="3" type="primary">aclT</name>
    <name type="ORF">AO090001000038</name>
</gene>
<organism>
    <name type="scientific">Aspergillus oryzae (strain ATCC 42149 / RIB 40)</name>
    <name type="common">Yellow koji mold</name>
    <dbReference type="NCBI Taxonomy" id="510516"/>
    <lineage>
        <taxon>Eukaryota</taxon>
        <taxon>Fungi</taxon>
        <taxon>Dikarya</taxon>
        <taxon>Ascomycota</taxon>
        <taxon>Pezizomycotina</taxon>
        <taxon>Eurotiomycetes</taxon>
        <taxon>Eurotiomycetidae</taxon>
        <taxon>Eurotiales</taxon>
        <taxon>Aspergillaceae</taxon>
        <taxon>Aspergillus</taxon>
        <taxon>Aspergillus subgen. Circumdati</taxon>
    </lineage>
</organism>
<sequence length="334" mass="36255">MCDSSQSTADVLIIGGGPAGSNAAWELGQAHHRVILFNASIDRLRDPDVNTASTRPALDLLLHSRRKTPDVFRPFRQEIGKESSEVSVHNQRITQVQRLPNGFFQAEDDVGHVWTAKVLVLADGAEEILPDIDGYDTCWEQQRILTHPAEDEPRSLISSCLAVLAVGDLAELTMALHTVWQARQFAASVRVYTHGDEDLARALETRISPDARIAIQTTPIQSLQPGSDSPSQVVVHLADGSSIVESHVYHRPASQLQGPFARQLNLELTESGAIRISARVPYMTSLDGVYAGGDCASLGQRTLFKALAMGQGLAAAVAARLERGNWGNAVEEQD</sequence>
<reference key="1">
    <citation type="journal article" date="2005" name="Nature">
        <title>Genome sequencing and analysis of Aspergillus oryzae.</title>
        <authorList>
            <person name="Machida M."/>
            <person name="Asai K."/>
            <person name="Sano M."/>
            <person name="Tanaka T."/>
            <person name="Kumagai T."/>
            <person name="Terai G."/>
            <person name="Kusumoto K."/>
            <person name="Arima T."/>
            <person name="Akita O."/>
            <person name="Kashiwagi Y."/>
            <person name="Abe K."/>
            <person name="Gomi K."/>
            <person name="Horiuchi H."/>
            <person name="Kitamoto K."/>
            <person name="Kobayashi T."/>
            <person name="Takeuchi M."/>
            <person name="Denning D.W."/>
            <person name="Galagan J.E."/>
            <person name="Nierman W.C."/>
            <person name="Yu J."/>
            <person name="Archer D.B."/>
            <person name="Bennett J.W."/>
            <person name="Bhatnagar D."/>
            <person name="Cleveland T.E."/>
            <person name="Fedorova N.D."/>
            <person name="Gotoh O."/>
            <person name="Horikawa H."/>
            <person name="Hosoyama A."/>
            <person name="Ichinomiya M."/>
            <person name="Igarashi R."/>
            <person name="Iwashita K."/>
            <person name="Juvvadi P.R."/>
            <person name="Kato M."/>
            <person name="Kato Y."/>
            <person name="Kin T."/>
            <person name="Kokubun A."/>
            <person name="Maeda H."/>
            <person name="Maeyama N."/>
            <person name="Maruyama J."/>
            <person name="Nagasaki H."/>
            <person name="Nakajima T."/>
            <person name="Oda K."/>
            <person name="Okada K."/>
            <person name="Paulsen I."/>
            <person name="Sakamoto K."/>
            <person name="Sawano T."/>
            <person name="Takahashi M."/>
            <person name="Takase K."/>
            <person name="Terabayashi Y."/>
            <person name="Wortman J.R."/>
            <person name="Yamada O."/>
            <person name="Yamagata Y."/>
            <person name="Anazawa H."/>
            <person name="Hata Y."/>
            <person name="Koide Y."/>
            <person name="Komori T."/>
            <person name="Koyama Y."/>
            <person name="Minetoki T."/>
            <person name="Suharnan S."/>
            <person name="Tanaka A."/>
            <person name="Isono K."/>
            <person name="Kuhara S."/>
            <person name="Ogasawara N."/>
            <person name="Kikuchi H."/>
        </authorList>
    </citation>
    <scope>NUCLEOTIDE SEQUENCE [LARGE SCALE GENOMIC DNA]</scope>
    <source>
        <strain>ATCC 42149 / RIB 40</strain>
    </source>
</reference>
<reference key="2">
    <citation type="journal article" date="2014" name="Angew. Chem. Int. Ed.">
        <title>Biosynthesis of the halogenated mycotoxin aspirochlorine in koji mold involves a cryptic amino acid conversion.</title>
        <authorList>
            <person name="Chankhamjon P."/>
            <person name="Boettger-Schmidt D."/>
            <person name="Scherlach K."/>
            <person name="Urbansky B."/>
            <person name="Lackner G."/>
            <person name="Kalb D."/>
            <person name="Dahse H.M."/>
            <person name="Hoffmeister D."/>
            <person name="Hertweck C."/>
        </authorList>
    </citation>
    <scope>FUNCTION</scope>
    <scope>PATHWAY</scope>
</reference>